<proteinExistence type="evidence at protein level"/>
<evidence type="ECO:0000255" key="1">
    <source>
        <dbReference type="PROSITE-ProRule" id="PRU00094"/>
    </source>
</evidence>
<evidence type="ECO:0000256" key="2">
    <source>
        <dbReference type="SAM" id="MobiDB-lite"/>
    </source>
</evidence>
<evidence type="ECO:0000269" key="3">
    <source>
    </source>
</evidence>
<evidence type="ECO:0000305" key="4"/>
<feature type="chain" id="PRO_0000083488" description="Protein GZF3">
    <location>
        <begin position="1"/>
        <end position="551"/>
    </location>
</feature>
<feature type="zinc finger region" description="GATA-type" evidence="1">
    <location>
        <begin position="131"/>
        <end position="155"/>
    </location>
</feature>
<feature type="region of interest" description="Disordered" evidence="2">
    <location>
        <begin position="17"/>
        <end position="43"/>
    </location>
</feature>
<feature type="region of interest" description="Disordered" evidence="2">
    <location>
        <begin position="212"/>
        <end position="260"/>
    </location>
</feature>
<feature type="region of interest" description="Disordered" evidence="2">
    <location>
        <begin position="379"/>
        <end position="400"/>
    </location>
</feature>
<feature type="region of interest" description="Disordered" evidence="2">
    <location>
        <begin position="467"/>
        <end position="490"/>
    </location>
</feature>
<feature type="compositionally biased region" description="Polar residues" evidence="2">
    <location>
        <begin position="228"/>
        <end position="239"/>
    </location>
</feature>
<feature type="compositionally biased region" description="Basic and acidic residues" evidence="2">
    <location>
        <begin position="244"/>
        <end position="254"/>
    </location>
</feature>
<feature type="compositionally biased region" description="Polar residues" evidence="2">
    <location>
        <begin position="388"/>
        <end position="400"/>
    </location>
</feature>
<feature type="compositionally biased region" description="Low complexity" evidence="2">
    <location>
        <begin position="467"/>
        <end position="477"/>
    </location>
</feature>
<feature type="compositionally biased region" description="Basic and acidic residues" evidence="2">
    <location>
        <begin position="478"/>
        <end position="490"/>
    </location>
</feature>
<gene>
    <name type="primary">GZF3</name>
    <name type="ordered locus">YJL110C</name>
    <name type="ORF">J0806</name>
</gene>
<sequence length="551" mass="60520">MASQATTLRGYNIRKRDNVFEPKSSENLNSLNQSEEEGHIGRWPPLGYEAVSAEQKSAVQLRESQAGASISNNMNFKANDKSFSTSTAGRMSPDTNSLHHILPKNQVKNNGQTMDANCNNNVSNDANVPVCKNCLTSTTPLWRRDEHGAMLCNACGLFLKLHGKPRPISLKTDVIKSRNRKSNTNHAHNLDNFRNQTLIAELKGDCNIESSGRKANRVTSEDKKKKSSQLLMGTSSTAKISKKPKTESKERSDSHLSATKLEVLMSGDCSRPNLKPKLPKQDTAIYQEKLLTFPSYTDVKEYSNSAHQSAFIKERSQFNAASFPLNASHSVTSKTGADSPQLPHLSMLLGSLSSTSISNNGSEIVSNCNNGIASTAATLAPTSSRTTDSNPSEVPNQIRSTMSSPDIISAKRNDPAPLSFHMASINDMLETRDRAISNVKTETTPPHFIPFLQSSKAPCISKANSQSISNSVSSSDVSGRKFENHPAKDLGDQLSTKLHKEEEIIKLKTRINELELVTDLYRRHINELDGKCRALEERLQRTVKQEGNKGG</sequence>
<protein>
    <recommendedName>
        <fullName>Protein GZF3</fullName>
    </recommendedName>
</protein>
<name>GZF3_YEAST</name>
<accession>P42944</accession>
<accession>D6VW74</accession>
<reference key="1">
    <citation type="journal article" date="1995" name="Yeast">
        <title>A 37.5 kb region of yeast chromosome X includes the SME1, MEF2, GSH1 and CSD3 genes, a TCP-1-related gene, an open reading frame similar to the DAL80 gene, and a tRNA(Arg).</title>
        <authorList>
            <person name="Rasmussen S.W."/>
        </authorList>
    </citation>
    <scope>NUCLEOTIDE SEQUENCE [GENOMIC DNA]</scope>
    <source>
        <strain>ATCC 96604 / S288c / FY1679</strain>
    </source>
</reference>
<reference key="2">
    <citation type="journal article" date="1996" name="Yeast">
        <title>Sequencing analysis of a 40.2 kb fragment of yeast chromosome X reveals 19 open reading frames including URA2 (5' end), TRK1, PBS2, SPT10, GCD14, RPE1, PHO86, NCA3, ASF1, CCT7, GZF3, two tRNA genes, three remnant delta elements and a Ty4 transposon.</title>
        <authorList>
            <person name="Cziepluch C."/>
            <person name="Kordes E."/>
            <person name="Pujol A."/>
            <person name="Jauniaux J.-C."/>
        </authorList>
    </citation>
    <scope>NUCLEOTIDE SEQUENCE [GENOMIC DNA]</scope>
    <source>
        <strain>ATCC 96604 / S288c / FY1679</strain>
    </source>
</reference>
<reference key="3">
    <citation type="journal article" date="1996" name="EMBO J.">
        <title>Complete nucleotide sequence of Saccharomyces cerevisiae chromosome X.</title>
        <authorList>
            <person name="Galibert F."/>
            <person name="Alexandraki D."/>
            <person name="Baur A."/>
            <person name="Boles E."/>
            <person name="Chalwatzis N."/>
            <person name="Chuat J.-C."/>
            <person name="Coster F."/>
            <person name="Cziepluch C."/>
            <person name="de Haan M."/>
            <person name="Domdey H."/>
            <person name="Durand P."/>
            <person name="Entian K.-D."/>
            <person name="Gatius M."/>
            <person name="Goffeau A."/>
            <person name="Grivell L.A."/>
            <person name="Hennemann A."/>
            <person name="Herbert C.J."/>
            <person name="Heumann K."/>
            <person name="Hilger F."/>
            <person name="Hollenberg C.P."/>
            <person name="Huang M.-E."/>
            <person name="Jacq C."/>
            <person name="Jauniaux J.-C."/>
            <person name="Katsoulou C."/>
            <person name="Kirchrath L."/>
            <person name="Kleine K."/>
            <person name="Kordes E."/>
            <person name="Koetter P."/>
            <person name="Liebl S."/>
            <person name="Louis E.J."/>
            <person name="Manus V."/>
            <person name="Mewes H.-W."/>
            <person name="Miosga T."/>
            <person name="Obermaier B."/>
            <person name="Perea J."/>
            <person name="Pohl T.M."/>
            <person name="Portetelle D."/>
            <person name="Pujol A."/>
            <person name="Purnelle B."/>
            <person name="Ramezani Rad M."/>
            <person name="Rasmussen S.W."/>
            <person name="Rose M."/>
            <person name="Rossau R."/>
            <person name="Schaaff-Gerstenschlaeger I."/>
            <person name="Smits P.H.M."/>
            <person name="Scarcez T."/>
            <person name="Soriano N."/>
            <person name="To Van D."/>
            <person name="Tzermia M."/>
            <person name="Van Broekhoven A."/>
            <person name="Vandenbol M."/>
            <person name="Wedler H."/>
            <person name="von Wettstein D."/>
            <person name="Wambutt R."/>
            <person name="Zagulski M."/>
            <person name="Zollner A."/>
            <person name="Karpfinger-Hartl L."/>
        </authorList>
    </citation>
    <scope>NUCLEOTIDE SEQUENCE [LARGE SCALE GENOMIC DNA]</scope>
    <source>
        <strain>ATCC 204508 / S288c</strain>
    </source>
</reference>
<reference key="4">
    <citation type="journal article" date="2014" name="G3 (Bethesda)">
        <title>The reference genome sequence of Saccharomyces cerevisiae: Then and now.</title>
        <authorList>
            <person name="Engel S.R."/>
            <person name="Dietrich F.S."/>
            <person name="Fisk D.G."/>
            <person name="Binkley G."/>
            <person name="Balakrishnan R."/>
            <person name="Costanzo M.C."/>
            <person name="Dwight S.S."/>
            <person name="Hitz B.C."/>
            <person name="Karra K."/>
            <person name="Nash R.S."/>
            <person name="Weng S."/>
            <person name="Wong E.D."/>
            <person name="Lloyd P."/>
            <person name="Skrzypek M.S."/>
            <person name="Miyasato S.R."/>
            <person name="Simison M."/>
            <person name="Cherry J.M."/>
        </authorList>
    </citation>
    <scope>GENOME REANNOTATION</scope>
    <source>
        <strain>ATCC 204508 / S288c</strain>
    </source>
</reference>
<reference key="5">
    <citation type="journal article" date="2003" name="Nature">
        <title>Global analysis of protein expression in yeast.</title>
        <authorList>
            <person name="Ghaemmaghami S."/>
            <person name="Huh W.-K."/>
            <person name="Bower K."/>
            <person name="Howson R.W."/>
            <person name="Belle A."/>
            <person name="Dephoure N."/>
            <person name="O'Shea E.K."/>
            <person name="Weissman J.S."/>
        </authorList>
    </citation>
    <scope>LEVEL OF PROTEIN EXPRESSION [LARGE SCALE ANALYSIS]</scope>
</reference>
<reference key="6">
    <citation type="journal article" date="2008" name="Mol. Cell. Proteomics">
        <title>A multidimensional chromatography technology for in-depth phosphoproteome analysis.</title>
        <authorList>
            <person name="Albuquerque C.P."/>
            <person name="Smolka M.B."/>
            <person name="Payne S.H."/>
            <person name="Bafna V."/>
            <person name="Eng J."/>
            <person name="Zhou H."/>
        </authorList>
    </citation>
    <scope>IDENTIFICATION BY MASS SPECTROMETRY [LARGE SCALE ANALYSIS]</scope>
</reference>
<keyword id="KW-0238">DNA-binding</keyword>
<keyword id="KW-0479">Metal-binding</keyword>
<keyword id="KW-0539">Nucleus</keyword>
<keyword id="KW-1185">Reference proteome</keyword>
<keyword id="KW-0804">Transcription</keyword>
<keyword id="KW-0805">Transcription regulation</keyword>
<keyword id="KW-0862">Zinc</keyword>
<keyword id="KW-0863">Zinc-finger</keyword>
<organism>
    <name type="scientific">Saccharomyces cerevisiae (strain ATCC 204508 / S288c)</name>
    <name type="common">Baker's yeast</name>
    <dbReference type="NCBI Taxonomy" id="559292"/>
    <lineage>
        <taxon>Eukaryota</taxon>
        <taxon>Fungi</taxon>
        <taxon>Dikarya</taxon>
        <taxon>Ascomycota</taxon>
        <taxon>Saccharomycotina</taxon>
        <taxon>Saccharomycetes</taxon>
        <taxon>Saccharomycetales</taxon>
        <taxon>Saccharomycetaceae</taxon>
        <taxon>Saccharomyces</taxon>
    </lineage>
</organism>
<dbReference type="EMBL" id="X85021">
    <property type="protein sequence ID" value="CAA59384.1"/>
    <property type="molecule type" value="Genomic_DNA"/>
</dbReference>
<dbReference type="EMBL" id="Z49385">
    <property type="protein sequence ID" value="CAA89405.1"/>
    <property type="molecule type" value="Genomic_DNA"/>
</dbReference>
<dbReference type="EMBL" id="X86353">
    <property type="protein sequence ID" value="CAA60126.1"/>
    <property type="molecule type" value="Genomic_DNA"/>
</dbReference>
<dbReference type="EMBL" id="BK006943">
    <property type="protein sequence ID" value="DAA08690.1"/>
    <property type="molecule type" value="Genomic_DNA"/>
</dbReference>
<dbReference type="PIR" id="S53377">
    <property type="entry name" value="S53377"/>
</dbReference>
<dbReference type="RefSeq" id="NP_012425.1">
    <property type="nucleotide sequence ID" value="NM_001181543.1"/>
</dbReference>
<dbReference type="SMR" id="P42944"/>
<dbReference type="BioGRID" id="33646">
    <property type="interactions" value="195"/>
</dbReference>
<dbReference type="DIP" id="DIP-1359N"/>
<dbReference type="FunCoup" id="P42944">
    <property type="interactions" value="801"/>
</dbReference>
<dbReference type="IntAct" id="P42944">
    <property type="interactions" value="13"/>
</dbReference>
<dbReference type="MINT" id="P42944"/>
<dbReference type="STRING" id="4932.YJL110C"/>
<dbReference type="GlyGen" id="P42944">
    <property type="glycosylation" value="1 site, 1 O-linked glycan (1 site)"/>
</dbReference>
<dbReference type="iPTMnet" id="P42944"/>
<dbReference type="PaxDb" id="4932-YJL110C"/>
<dbReference type="PeptideAtlas" id="P42944"/>
<dbReference type="EnsemblFungi" id="YJL110C_mRNA">
    <property type="protein sequence ID" value="YJL110C"/>
    <property type="gene ID" value="YJL110C"/>
</dbReference>
<dbReference type="GeneID" id="853334"/>
<dbReference type="KEGG" id="sce:YJL110C"/>
<dbReference type="AGR" id="SGD:S000003646"/>
<dbReference type="SGD" id="S000003646">
    <property type="gene designation" value="GZF3"/>
</dbReference>
<dbReference type="VEuPathDB" id="FungiDB:YJL110C"/>
<dbReference type="eggNOG" id="KOG1601">
    <property type="taxonomic scope" value="Eukaryota"/>
</dbReference>
<dbReference type="GeneTree" id="ENSGT00940000176497"/>
<dbReference type="HOGENOM" id="CLU_594549_0_0_1"/>
<dbReference type="InParanoid" id="P42944"/>
<dbReference type="OMA" id="HINELDG"/>
<dbReference type="OrthoDB" id="515401at2759"/>
<dbReference type="BioCyc" id="YEAST:G3O-31564-MONOMER"/>
<dbReference type="Reactome" id="R-SCE-9018519">
    <property type="pathway name" value="Estrogen-dependent gene expression"/>
</dbReference>
<dbReference type="BioGRID-ORCS" id="853334">
    <property type="hits" value="0 hits in 13 CRISPR screens"/>
</dbReference>
<dbReference type="PRO" id="PR:P42944"/>
<dbReference type="Proteomes" id="UP000002311">
    <property type="component" value="Chromosome X"/>
</dbReference>
<dbReference type="RNAct" id="P42944">
    <property type="molecule type" value="protein"/>
</dbReference>
<dbReference type="GO" id="GO:0005634">
    <property type="term" value="C:nucleus"/>
    <property type="evidence" value="ECO:0000314"/>
    <property type="project" value="SGD"/>
</dbReference>
<dbReference type="GO" id="GO:0000981">
    <property type="term" value="F:DNA-binding transcription factor activity, RNA polymerase II-specific"/>
    <property type="evidence" value="ECO:0000314"/>
    <property type="project" value="SGD"/>
</dbReference>
<dbReference type="GO" id="GO:0000978">
    <property type="term" value="F:RNA polymerase II cis-regulatory region sequence-specific DNA binding"/>
    <property type="evidence" value="ECO:0000318"/>
    <property type="project" value="GO_Central"/>
</dbReference>
<dbReference type="GO" id="GO:0043565">
    <property type="term" value="F:sequence-specific DNA binding"/>
    <property type="evidence" value="ECO:0000314"/>
    <property type="project" value="SGD"/>
</dbReference>
<dbReference type="GO" id="GO:0008270">
    <property type="term" value="F:zinc ion binding"/>
    <property type="evidence" value="ECO:0007669"/>
    <property type="project" value="UniProtKB-KW"/>
</dbReference>
<dbReference type="GO" id="GO:0051457">
    <property type="term" value="P:maintenance of protein location in nucleus"/>
    <property type="evidence" value="ECO:0000353"/>
    <property type="project" value="SGD"/>
</dbReference>
<dbReference type="GO" id="GO:0000122">
    <property type="term" value="P:negative regulation of transcription by RNA polymerase II"/>
    <property type="evidence" value="ECO:0000315"/>
    <property type="project" value="SGD"/>
</dbReference>
<dbReference type="GO" id="GO:0090295">
    <property type="term" value="P:nitrogen catabolite repression of transcription"/>
    <property type="evidence" value="ECO:0000315"/>
    <property type="project" value="SGD"/>
</dbReference>
<dbReference type="GO" id="GO:0045944">
    <property type="term" value="P:positive regulation of transcription by RNA polymerase II"/>
    <property type="evidence" value="ECO:0000318"/>
    <property type="project" value="GO_Central"/>
</dbReference>
<dbReference type="CDD" id="cd00202">
    <property type="entry name" value="ZnF_GATA"/>
    <property type="match status" value="1"/>
</dbReference>
<dbReference type="FunFam" id="3.30.50.10:FF:000007">
    <property type="entry name" value="Nitrogen regulatory AreA, N-terminal"/>
    <property type="match status" value="1"/>
</dbReference>
<dbReference type="Gene3D" id="3.30.50.10">
    <property type="entry name" value="Erythroid Transcription Factor GATA-1, subunit A"/>
    <property type="match status" value="1"/>
</dbReference>
<dbReference type="InterPro" id="IPR039355">
    <property type="entry name" value="Transcription_factor_GATA"/>
</dbReference>
<dbReference type="InterPro" id="IPR000679">
    <property type="entry name" value="Znf_GATA"/>
</dbReference>
<dbReference type="InterPro" id="IPR013088">
    <property type="entry name" value="Znf_NHR/GATA"/>
</dbReference>
<dbReference type="PANTHER" id="PTHR10071:SF281">
    <property type="entry name" value="BOX A-BINDING FACTOR-RELATED"/>
    <property type="match status" value="1"/>
</dbReference>
<dbReference type="PANTHER" id="PTHR10071">
    <property type="entry name" value="TRANSCRIPTION FACTOR GATA FAMILY MEMBER"/>
    <property type="match status" value="1"/>
</dbReference>
<dbReference type="Pfam" id="PF00320">
    <property type="entry name" value="GATA"/>
    <property type="match status" value="1"/>
</dbReference>
<dbReference type="PRINTS" id="PR00619">
    <property type="entry name" value="GATAZNFINGER"/>
</dbReference>
<dbReference type="SMART" id="SM00401">
    <property type="entry name" value="ZnF_GATA"/>
    <property type="match status" value="1"/>
</dbReference>
<dbReference type="SUPFAM" id="SSF57716">
    <property type="entry name" value="Glucocorticoid receptor-like (DNA-binding domain)"/>
    <property type="match status" value="1"/>
</dbReference>
<dbReference type="PROSITE" id="PS00344">
    <property type="entry name" value="GATA_ZN_FINGER_1"/>
    <property type="match status" value="1"/>
</dbReference>
<dbReference type="PROSITE" id="PS50114">
    <property type="entry name" value="GATA_ZN_FINGER_2"/>
    <property type="match status" value="1"/>
</dbReference>
<comment type="subcellular location">
    <subcellularLocation>
        <location evidence="4">Nucleus</location>
    </subcellularLocation>
</comment>
<comment type="miscellaneous">
    <text evidence="3">Present with 319 molecules/cell in log phase SD medium.</text>
</comment>